<comment type="function">
    <text evidence="1">Responsible for the release of ribosomes from messenger RNA at the termination of protein biosynthesis. May increase the efficiency of translation by recycling ribosomes from one round of translation to another.</text>
</comment>
<comment type="subcellular location">
    <subcellularLocation>
        <location evidence="1">Cytoplasm</location>
    </subcellularLocation>
</comment>
<comment type="similarity">
    <text evidence="1">Belongs to the RRF family.</text>
</comment>
<proteinExistence type="inferred from homology"/>
<gene>
    <name evidence="1" type="primary">frr</name>
    <name type="ordered locus">EC55989_0166</name>
</gene>
<protein>
    <recommendedName>
        <fullName evidence="1">Ribosome-recycling factor</fullName>
        <shortName evidence="1">RRF</shortName>
    </recommendedName>
    <alternativeName>
        <fullName evidence="1">Ribosome-releasing factor</fullName>
    </alternativeName>
</protein>
<keyword id="KW-0007">Acetylation</keyword>
<keyword id="KW-0963">Cytoplasm</keyword>
<keyword id="KW-0648">Protein biosynthesis</keyword>
<keyword id="KW-1185">Reference proteome</keyword>
<accession>B7LGN3</accession>
<organism>
    <name type="scientific">Escherichia coli (strain 55989 / EAEC)</name>
    <dbReference type="NCBI Taxonomy" id="585055"/>
    <lineage>
        <taxon>Bacteria</taxon>
        <taxon>Pseudomonadati</taxon>
        <taxon>Pseudomonadota</taxon>
        <taxon>Gammaproteobacteria</taxon>
        <taxon>Enterobacterales</taxon>
        <taxon>Enterobacteriaceae</taxon>
        <taxon>Escherichia</taxon>
    </lineage>
</organism>
<evidence type="ECO:0000255" key="1">
    <source>
        <dbReference type="HAMAP-Rule" id="MF_00040"/>
    </source>
</evidence>
<feature type="chain" id="PRO_1000194923" description="Ribosome-recycling factor">
    <location>
        <begin position="1"/>
        <end position="185"/>
    </location>
</feature>
<feature type="modified residue" description="N6-acetyllysine" evidence="1">
    <location>
        <position position="162"/>
    </location>
</feature>
<reference key="1">
    <citation type="journal article" date="2009" name="PLoS Genet.">
        <title>Organised genome dynamics in the Escherichia coli species results in highly diverse adaptive paths.</title>
        <authorList>
            <person name="Touchon M."/>
            <person name="Hoede C."/>
            <person name="Tenaillon O."/>
            <person name="Barbe V."/>
            <person name="Baeriswyl S."/>
            <person name="Bidet P."/>
            <person name="Bingen E."/>
            <person name="Bonacorsi S."/>
            <person name="Bouchier C."/>
            <person name="Bouvet O."/>
            <person name="Calteau A."/>
            <person name="Chiapello H."/>
            <person name="Clermont O."/>
            <person name="Cruveiller S."/>
            <person name="Danchin A."/>
            <person name="Diard M."/>
            <person name="Dossat C."/>
            <person name="Karoui M.E."/>
            <person name="Frapy E."/>
            <person name="Garry L."/>
            <person name="Ghigo J.M."/>
            <person name="Gilles A.M."/>
            <person name="Johnson J."/>
            <person name="Le Bouguenec C."/>
            <person name="Lescat M."/>
            <person name="Mangenot S."/>
            <person name="Martinez-Jehanne V."/>
            <person name="Matic I."/>
            <person name="Nassif X."/>
            <person name="Oztas S."/>
            <person name="Petit M.A."/>
            <person name="Pichon C."/>
            <person name="Rouy Z."/>
            <person name="Ruf C.S."/>
            <person name="Schneider D."/>
            <person name="Tourret J."/>
            <person name="Vacherie B."/>
            <person name="Vallenet D."/>
            <person name="Medigue C."/>
            <person name="Rocha E.P.C."/>
            <person name="Denamur E."/>
        </authorList>
    </citation>
    <scope>NUCLEOTIDE SEQUENCE [LARGE SCALE GENOMIC DNA]</scope>
    <source>
        <strain>55989 / EAEC</strain>
    </source>
</reference>
<name>RRF_ECO55</name>
<dbReference type="EMBL" id="CU928145">
    <property type="protein sequence ID" value="CAU96052.1"/>
    <property type="molecule type" value="Genomic_DNA"/>
</dbReference>
<dbReference type="RefSeq" id="WP_000622418.1">
    <property type="nucleotide sequence ID" value="NZ_CP028304.1"/>
</dbReference>
<dbReference type="SMR" id="B7LGN3"/>
<dbReference type="GeneID" id="93777253"/>
<dbReference type="KEGG" id="eck:EC55989_0166"/>
<dbReference type="HOGENOM" id="CLU_073981_2_1_6"/>
<dbReference type="Proteomes" id="UP000000746">
    <property type="component" value="Chromosome"/>
</dbReference>
<dbReference type="GO" id="GO:0005829">
    <property type="term" value="C:cytosol"/>
    <property type="evidence" value="ECO:0007669"/>
    <property type="project" value="GOC"/>
</dbReference>
<dbReference type="GO" id="GO:0043023">
    <property type="term" value="F:ribosomal large subunit binding"/>
    <property type="evidence" value="ECO:0007669"/>
    <property type="project" value="TreeGrafter"/>
</dbReference>
<dbReference type="GO" id="GO:0002184">
    <property type="term" value="P:cytoplasmic translational termination"/>
    <property type="evidence" value="ECO:0007669"/>
    <property type="project" value="TreeGrafter"/>
</dbReference>
<dbReference type="CDD" id="cd00520">
    <property type="entry name" value="RRF"/>
    <property type="match status" value="1"/>
</dbReference>
<dbReference type="FunFam" id="1.10.132.20:FF:000001">
    <property type="entry name" value="Ribosome-recycling factor"/>
    <property type="match status" value="1"/>
</dbReference>
<dbReference type="FunFam" id="3.30.1360.40:FF:000001">
    <property type="entry name" value="Ribosome-recycling factor"/>
    <property type="match status" value="1"/>
</dbReference>
<dbReference type="Gene3D" id="3.30.1360.40">
    <property type="match status" value="1"/>
</dbReference>
<dbReference type="Gene3D" id="1.10.132.20">
    <property type="entry name" value="Ribosome-recycling factor"/>
    <property type="match status" value="1"/>
</dbReference>
<dbReference type="HAMAP" id="MF_00040">
    <property type="entry name" value="RRF"/>
    <property type="match status" value="1"/>
</dbReference>
<dbReference type="InterPro" id="IPR002661">
    <property type="entry name" value="Ribosome_recyc_fac"/>
</dbReference>
<dbReference type="InterPro" id="IPR023584">
    <property type="entry name" value="Ribosome_recyc_fac_dom"/>
</dbReference>
<dbReference type="InterPro" id="IPR036191">
    <property type="entry name" value="RRF_sf"/>
</dbReference>
<dbReference type="NCBIfam" id="TIGR00496">
    <property type="entry name" value="frr"/>
    <property type="match status" value="1"/>
</dbReference>
<dbReference type="PANTHER" id="PTHR20982:SF3">
    <property type="entry name" value="MITOCHONDRIAL RIBOSOME RECYCLING FACTOR PSEUDO 1"/>
    <property type="match status" value="1"/>
</dbReference>
<dbReference type="PANTHER" id="PTHR20982">
    <property type="entry name" value="RIBOSOME RECYCLING FACTOR"/>
    <property type="match status" value="1"/>
</dbReference>
<dbReference type="Pfam" id="PF01765">
    <property type="entry name" value="RRF"/>
    <property type="match status" value="1"/>
</dbReference>
<dbReference type="SUPFAM" id="SSF55194">
    <property type="entry name" value="Ribosome recycling factor, RRF"/>
    <property type="match status" value="1"/>
</dbReference>
<sequence>MISDIRKDAEVRMDKCVEAFKTQISKIRTGRASPSLLDGIVVEYYGTPTPLRQLASVTVEDSRTLKINVFDRSMSPAVEKAIMASDLGLNPNSAGSDIRVPLPPLTEERRKDLTKIVRGEAEQARVAVRNVRRDANDKVKALLKDKEISEDDDRRSQDDVQKLTDAAIKKIEAALADKEAELMQF</sequence>